<evidence type="ECO:0000250" key="1"/>
<evidence type="ECO:0000250" key="2">
    <source>
        <dbReference type="UniProtKB" id="P10147"/>
    </source>
</evidence>
<evidence type="ECO:0000255" key="3"/>
<evidence type="ECO:0000305" key="4"/>
<comment type="function">
    <text evidence="2">Monokine with inflammatory and chemokinetic properties. Binds to CCR1, CCR4 and CCR5. One of the major HIV-suppressive factors produced by CD8+ T-cells. Recombinant MIP-1-alpha induces a dose-dependent inhibition of different strains of HIV-1, HIV-2, and simian immunodeficiency virus (SIV).</text>
</comment>
<comment type="subunit">
    <text evidence="2">Self-associates. Also heterodimer of MIP-1-alpha(4-69) and MIP-1-beta(3-69). Interacts with CCR1.</text>
</comment>
<comment type="subcellular location">
    <subcellularLocation>
        <location evidence="1">Secreted</location>
    </subcellularLocation>
</comment>
<comment type="similarity">
    <text evidence="4">Belongs to the intercrine beta (chemokine CC) family.</text>
</comment>
<keyword id="KW-0145">Chemotaxis</keyword>
<keyword id="KW-0202">Cytokine</keyword>
<keyword id="KW-1015">Disulfide bond</keyword>
<keyword id="KW-0395">Inflammatory response</keyword>
<keyword id="KW-1185">Reference proteome</keyword>
<keyword id="KW-0964">Secreted</keyword>
<keyword id="KW-0732">Signal</keyword>
<accession>Q68A92</accession>
<dbReference type="EMBL" id="AB164618">
    <property type="protein sequence ID" value="BAD42447.1"/>
    <property type="molecule type" value="mRNA"/>
</dbReference>
<dbReference type="SMR" id="Q68A92"/>
<dbReference type="FunCoup" id="Q68A92">
    <property type="interactions" value="213"/>
</dbReference>
<dbReference type="STRING" id="9615.ENSCAFP00000063840"/>
<dbReference type="PaxDb" id="9612-ENSCAFP00000026832"/>
<dbReference type="eggNOG" id="ENOG502SAF0">
    <property type="taxonomic scope" value="Eukaryota"/>
</dbReference>
<dbReference type="InParanoid" id="Q68A92"/>
<dbReference type="Proteomes" id="UP000002254">
    <property type="component" value="Unplaced"/>
</dbReference>
<dbReference type="Proteomes" id="UP000694429">
    <property type="component" value="Unplaced"/>
</dbReference>
<dbReference type="Proteomes" id="UP000694542">
    <property type="component" value="Unplaced"/>
</dbReference>
<dbReference type="Proteomes" id="UP000805418">
    <property type="component" value="Unplaced"/>
</dbReference>
<dbReference type="GO" id="GO:0005737">
    <property type="term" value="C:cytoplasm"/>
    <property type="evidence" value="ECO:0000250"/>
    <property type="project" value="UniProtKB"/>
</dbReference>
<dbReference type="GO" id="GO:0005829">
    <property type="term" value="C:cytosol"/>
    <property type="evidence" value="ECO:0000250"/>
    <property type="project" value="UniProtKB"/>
</dbReference>
<dbReference type="GO" id="GO:0005615">
    <property type="term" value="C:extracellular space"/>
    <property type="evidence" value="ECO:0000250"/>
    <property type="project" value="UniProtKB"/>
</dbReference>
<dbReference type="GO" id="GO:0048020">
    <property type="term" value="F:CCR chemokine receptor binding"/>
    <property type="evidence" value="ECO:0000318"/>
    <property type="project" value="GO_Central"/>
</dbReference>
<dbReference type="GO" id="GO:0042056">
    <property type="term" value="F:chemoattractant activity"/>
    <property type="evidence" value="ECO:0000250"/>
    <property type="project" value="UniProtKB"/>
</dbReference>
<dbReference type="GO" id="GO:0008009">
    <property type="term" value="F:chemokine activity"/>
    <property type="evidence" value="ECO:0000250"/>
    <property type="project" value="UniProtKB"/>
</dbReference>
<dbReference type="GO" id="GO:0016301">
    <property type="term" value="F:kinase activity"/>
    <property type="evidence" value="ECO:0000250"/>
    <property type="project" value="UniProtKB"/>
</dbReference>
<dbReference type="GO" id="GO:0016004">
    <property type="term" value="F:phospholipase activator activity"/>
    <property type="evidence" value="ECO:0000250"/>
    <property type="project" value="UniProtKB"/>
</dbReference>
<dbReference type="GO" id="GO:0004672">
    <property type="term" value="F:protein kinase activity"/>
    <property type="evidence" value="ECO:0000250"/>
    <property type="project" value="UniProtKB"/>
</dbReference>
<dbReference type="GO" id="GO:0061844">
    <property type="term" value="P:antimicrobial humoral immune response mediated by antimicrobial peptide"/>
    <property type="evidence" value="ECO:0000318"/>
    <property type="project" value="GO_Central"/>
</dbReference>
<dbReference type="GO" id="GO:0006816">
    <property type="term" value="P:calcium ion transport"/>
    <property type="evidence" value="ECO:0000250"/>
    <property type="project" value="UniProtKB"/>
</dbReference>
<dbReference type="GO" id="GO:0019722">
    <property type="term" value="P:calcium-mediated signaling"/>
    <property type="evidence" value="ECO:0000250"/>
    <property type="project" value="UniProtKB"/>
</dbReference>
<dbReference type="GO" id="GO:0001775">
    <property type="term" value="P:cell activation"/>
    <property type="evidence" value="ECO:0000250"/>
    <property type="project" value="UniProtKB"/>
</dbReference>
<dbReference type="GO" id="GO:0060326">
    <property type="term" value="P:cell chemotaxis"/>
    <property type="evidence" value="ECO:0000318"/>
    <property type="project" value="GO_Central"/>
</dbReference>
<dbReference type="GO" id="GO:0007267">
    <property type="term" value="P:cell-cell signaling"/>
    <property type="evidence" value="ECO:0000250"/>
    <property type="project" value="UniProtKB"/>
</dbReference>
<dbReference type="GO" id="GO:0070098">
    <property type="term" value="P:chemokine-mediated signaling pathway"/>
    <property type="evidence" value="ECO:0000318"/>
    <property type="project" value="GO_Central"/>
</dbReference>
<dbReference type="GO" id="GO:0006935">
    <property type="term" value="P:chemotaxis"/>
    <property type="evidence" value="ECO:0000250"/>
    <property type="project" value="UniProtKB"/>
</dbReference>
<dbReference type="GO" id="GO:0007010">
    <property type="term" value="P:cytoskeleton organization"/>
    <property type="evidence" value="ECO:0000250"/>
    <property type="project" value="UniProtKB"/>
</dbReference>
<dbReference type="GO" id="GO:0048245">
    <property type="term" value="P:eosinophil chemotaxis"/>
    <property type="evidence" value="ECO:0000250"/>
    <property type="project" value="UniProtKB"/>
</dbReference>
<dbReference type="GO" id="GO:0043308">
    <property type="term" value="P:eosinophil degranulation"/>
    <property type="evidence" value="ECO:0000250"/>
    <property type="project" value="UniProtKB"/>
</dbReference>
<dbReference type="GO" id="GO:0006887">
    <property type="term" value="P:exocytosis"/>
    <property type="evidence" value="ECO:0000250"/>
    <property type="project" value="UniProtKB"/>
</dbReference>
<dbReference type="GO" id="GO:0071621">
    <property type="term" value="P:granulocyte chemotaxis"/>
    <property type="evidence" value="ECO:0000250"/>
    <property type="project" value="UniProtKB"/>
</dbReference>
<dbReference type="GO" id="GO:0006954">
    <property type="term" value="P:inflammatory response"/>
    <property type="evidence" value="ECO:0000250"/>
    <property type="project" value="UniProtKB"/>
</dbReference>
<dbReference type="GO" id="GO:0006874">
    <property type="term" value="P:intracellular calcium ion homeostasis"/>
    <property type="evidence" value="ECO:0000250"/>
    <property type="project" value="UniProtKB"/>
</dbReference>
<dbReference type="GO" id="GO:0048247">
    <property type="term" value="P:lymphocyte chemotaxis"/>
    <property type="evidence" value="ECO:0000250"/>
    <property type="project" value="UniProtKB"/>
</dbReference>
<dbReference type="GO" id="GO:0002548">
    <property type="term" value="P:monocyte chemotaxis"/>
    <property type="evidence" value="ECO:0000250"/>
    <property type="project" value="UniProtKB"/>
</dbReference>
<dbReference type="GO" id="GO:0043922">
    <property type="term" value="P:negative regulation by host of viral transcription"/>
    <property type="evidence" value="ECO:0000250"/>
    <property type="project" value="UniProtKB"/>
</dbReference>
<dbReference type="GO" id="GO:0010629">
    <property type="term" value="P:negative regulation of gene expression"/>
    <property type="evidence" value="ECO:0000250"/>
    <property type="project" value="UniProtKB"/>
</dbReference>
<dbReference type="GO" id="GO:0045671">
    <property type="term" value="P:negative regulation of osteoclast differentiation"/>
    <property type="evidence" value="ECO:0000250"/>
    <property type="project" value="UniProtKB"/>
</dbReference>
<dbReference type="GO" id="GO:0030593">
    <property type="term" value="P:neutrophil chemotaxis"/>
    <property type="evidence" value="ECO:0000250"/>
    <property type="project" value="UniProtKB"/>
</dbReference>
<dbReference type="GO" id="GO:0001649">
    <property type="term" value="P:osteoblast differentiation"/>
    <property type="evidence" value="ECO:0000250"/>
    <property type="project" value="UniProtKB"/>
</dbReference>
<dbReference type="GO" id="GO:0050918">
    <property type="term" value="P:positive chemotaxis"/>
    <property type="evidence" value="ECO:0000250"/>
    <property type="project" value="UniProtKB"/>
</dbReference>
<dbReference type="GO" id="GO:0051928">
    <property type="term" value="P:positive regulation of calcium ion transport"/>
    <property type="evidence" value="ECO:0000250"/>
    <property type="project" value="UniProtKB"/>
</dbReference>
<dbReference type="GO" id="GO:0050850">
    <property type="term" value="P:positive regulation of calcium-mediated signaling"/>
    <property type="evidence" value="ECO:0000250"/>
    <property type="project" value="UniProtKB"/>
</dbReference>
<dbReference type="GO" id="GO:0030335">
    <property type="term" value="P:positive regulation of cell migration"/>
    <property type="evidence" value="ECO:0000250"/>
    <property type="project" value="UniProtKB"/>
</dbReference>
<dbReference type="GO" id="GO:0070374">
    <property type="term" value="P:positive regulation of ERK1 and ERK2 cascade"/>
    <property type="evidence" value="ECO:0000250"/>
    <property type="project" value="UniProtKB"/>
</dbReference>
<dbReference type="GO" id="GO:0010628">
    <property type="term" value="P:positive regulation of gene expression"/>
    <property type="evidence" value="ECO:0000250"/>
    <property type="project" value="UniProtKB"/>
</dbReference>
<dbReference type="GO" id="GO:2000503">
    <property type="term" value="P:positive regulation of natural killer cell chemotaxis"/>
    <property type="evidence" value="ECO:0000250"/>
    <property type="project" value="UniProtKB"/>
</dbReference>
<dbReference type="GO" id="GO:0050795">
    <property type="term" value="P:regulation of behavior"/>
    <property type="evidence" value="ECO:0000250"/>
    <property type="project" value="UniProtKB"/>
</dbReference>
<dbReference type="GO" id="GO:0008360">
    <property type="term" value="P:regulation of cell shape"/>
    <property type="evidence" value="ECO:0000250"/>
    <property type="project" value="UniProtKB"/>
</dbReference>
<dbReference type="GO" id="GO:0051930">
    <property type="term" value="P:regulation of sensory perception of pain"/>
    <property type="evidence" value="ECO:0000250"/>
    <property type="project" value="UniProtKB"/>
</dbReference>
<dbReference type="GO" id="GO:0014808">
    <property type="term" value="P:release of sequestered calcium ion into cytosol by sarcoplasmic reticulum"/>
    <property type="evidence" value="ECO:0000250"/>
    <property type="project" value="UniProtKB"/>
</dbReference>
<dbReference type="GO" id="GO:0070723">
    <property type="term" value="P:response to cholesterol"/>
    <property type="evidence" value="ECO:0000250"/>
    <property type="project" value="UniProtKB"/>
</dbReference>
<dbReference type="GO" id="GO:0009636">
    <property type="term" value="P:response to toxic substance"/>
    <property type="evidence" value="ECO:0000250"/>
    <property type="project" value="UniProtKB"/>
</dbReference>
<dbReference type="GO" id="GO:0023052">
    <property type="term" value="P:signaling"/>
    <property type="evidence" value="ECO:0000250"/>
    <property type="project" value="UniProtKB"/>
</dbReference>
<dbReference type="GO" id="GO:0010818">
    <property type="term" value="P:T cell chemotaxis"/>
    <property type="evidence" value="ECO:0000250"/>
    <property type="project" value="UniProtKB"/>
</dbReference>
<dbReference type="CDD" id="cd00272">
    <property type="entry name" value="Chemokine_CC"/>
    <property type="match status" value="1"/>
</dbReference>
<dbReference type="FunFam" id="2.40.50.40:FF:000002">
    <property type="entry name" value="C-C motif chemokine"/>
    <property type="match status" value="1"/>
</dbReference>
<dbReference type="Gene3D" id="2.40.50.40">
    <property type="match status" value="1"/>
</dbReference>
<dbReference type="InterPro" id="IPR039809">
    <property type="entry name" value="Chemokine_b/g/d"/>
</dbReference>
<dbReference type="InterPro" id="IPR000827">
    <property type="entry name" value="Chemokine_CC_CS"/>
</dbReference>
<dbReference type="InterPro" id="IPR001811">
    <property type="entry name" value="Chemokine_IL8-like_dom"/>
</dbReference>
<dbReference type="InterPro" id="IPR036048">
    <property type="entry name" value="Interleukin_8-like_sf"/>
</dbReference>
<dbReference type="PANTHER" id="PTHR12015:SF183">
    <property type="entry name" value="C-C MOTIF CHEMOKINE 3"/>
    <property type="match status" value="1"/>
</dbReference>
<dbReference type="PANTHER" id="PTHR12015">
    <property type="entry name" value="SMALL INDUCIBLE CYTOKINE A"/>
    <property type="match status" value="1"/>
</dbReference>
<dbReference type="Pfam" id="PF00048">
    <property type="entry name" value="IL8"/>
    <property type="match status" value="1"/>
</dbReference>
<dbReference type="SMART" id="SM00199">
    <property type="entry name" value="SCY"/>
    <property type="match status" value="1"/>
</dbReference>
<dbReference type="SUPFAM" id="SSF54117">
    <property type="entry name" value="Interleukin 8-like chemokines"/>
    <property type="match status" value="1"/>
</dbReference>
<dbReference type="PROSITE" id="PS00472">
    <property type="entry name" value="SMALL_CYTOKINES_CC"/>
    <property type="match status" value="1"/>
</dbReference>
<organism>
    <name type="scientific">Canis lupus familiaris</name>
    <name type="common">Dog</name>
    <name type="synonym">Canis familiaris</name>
    <dbReference type="NCBI Taxonomy" id="9615"/>
    <lineage>
        <taxon>Eukaryota</taxon>
        <taxon>Metazoa</taxon>
        <taxon>Chordata</taxon>
        <taxon>Craniata</taxon>
        <taxon>Vertebrata</taxon>
        <taxon>Euteleostomi</taxon>
        <taxon>Mammalia</taxon>
        <taxon>Eutheria</taxon>
        <taxon>Laurasiatheria</taxon>
        <taxon>Carnivora</taxon>
        <taxon>Caniformia</taxon>
        <taxon>Canidae</taxon>
        <taxon>Canis</taxon>
    </lineage>
</organism>
<sequence>MKVPGAALAVLLCTMSLCSQVFSPFGADTPIACCFSYVSKQIPRKFIVDCFETSSQCSKPGIIFETRKGRQACANPSEAWVQEYVADLKLKA</sequence>
<reference key="1">
    <citation type="submission" date="2004-03" db="EMBL/GenBank/DDBJ databases">
        <title>Expression analysis of gene in canine atopic dermatitis.</title>
        <authorList>
            <person name="Tsukui T."/>
            <person name="Sakaguchi M."/>
            <person name="Maeda S."/>
            <person name="Koyanagi M."/>
            <person name="Masuda K."/>
            <person name="Ohno K."/>
            <person name="Tsujimoto H."/>
            <person name="Iwabuchi S."/>
        </authorList>
    </citation>
    <scope>NUCLEOTIDE SEQUENCE [MRNA]</scope>
</reference>
<gene>
    <name type="primary">CCL3</name>
</gene>
<proteinExistence type="inferred from homology"/>
<protein>
    <recommendedName>
        <fullName>C-C motif chemokine 3</fullName>
    </recommendedName>
    <alternativeName>
        <fullName>Small-inducible cytokine A3</fullName>
    </alternativeName>
</protein>
<name>CCL3_CANLF</name>
<feature type="signal peptide" evidence="3">
    <location>
        <begin position="1"/>
        <end position="19"/>
    </location>
</feature>
<feature type="chain" id="PRO_0000005155" description="C-C motif chemokine 3">
    <location>
        <begin position="20"/>
        <end position="92"/>
    </location>
</feature>
<feature type="disulfide bond" evidence="2">
    <location>
        <begin position="33"/>
        <end position="57"/>
    </location>
</feature>
<feature type="disulfide bond" evidence="2">
    <location>
        <begin position="34"/>
        <end position="73"/>
    </location>
</feature>